<dbReference type="EMBL" id="AK127574">
    <property type="protein sequence ID" value="BAG54526.1"/>
    <property type="molecule type" value="mRNA"/>
</dbReference>
<dbReference type="EMBL" id="AL832005">
    <property type="protein sequence ID" value="CAH56224.1"/>
    <property type="molecule type" value="mRNA"/>
</dbReference>
<dbReference type="EMBL" id="BX537996">
    <property type="protein sequence ID" value="CAH56480.1"/>
    <property type="molecule type" value="mRNA"/>
</dbReference>
<dbReference type="EMBL" id="CH471068">
    <property type="protein sequence ID" value="EAW86867.1"/>
    <property type="molecule type" value="Genomic_DNA"/>
</dbReference>
<dbReference type="EMBL" id="BC052970">
    <property type="protein sequence ID" value="AAH52970.1"/>
    <property type="molecule type" value="mRNA"/>
</dbReference>
<dbReference type="CCDS" id="CCDS75747.1"/>
<dbReference type="RefSeq" id="NP_001264742.1">
    <property type="nucleotide sequence ID" value="NM_001277813.1"/>
</dbReference>
<dbReference type="RefSeq" id="NP_001264743.1">
    <property type="nucleotide sequence ID" value="NM_001277814.1"/>
</dbReference>
<dbReference type="RefSeq" id="NP_001264744.1">
    <property type="nucleotide sequence ID" value="NM_001277815.1"/>
</dbReference>
<dbReference type="RefSeq" id="NP_001264745.1">
    <property type="nucleotide sequence ID" value="NM_001277816.1"/>
</dbReference>
<dbReference type="RefSeq" id="NP_001264746.1">
    <property type="nucleotide sequence ID" value="NM_001277817.1"/>
</dbReference>
<dbReference type="RefSeq" id="NP_001264747.1">
    <property type="nucleotide sequence ID" value="NM_001277818.1"/>
</dbReference>
<dbReference type="RefSeq" id="NP_689971.4">
    <property type="nucleotide sequence ID" value="NM_152758.5"/>
</dbReference>
<dbReference type="PDB" id="6ZOT">
    <property type="method" value="X-ray"/>
    <property type="resolution" value="2.70 A"/>
    <property type="chains" value="A/B=392-571"/>
</dbReference>
<dbReference type="PDB" id="8BS5">
    <property type="method" value="X-ray"/>
    <property type="resolution" value="2.49 A"/>
    <property type="chains" value="A=388-567"/>
</dbReference>
<dbReference type="PDB" id="8BS6">
    <property type="method" value="X-ray"/>
    <property type="resolution" value="1.20 A"/>
    <property type="chains" value="A=388-585"/>
</dbReference>
<dbReference type="PDBsum" id="6ZOT"/>
<dbReference type="PDBsum" id="8BS5"/>
<dbReference type="PDBsum" id="8BS6"/>
<dbReference type="SMR" id="Q7Z739"/>
<dbReference type="BioGRID" id="128997">
    <property type="interactions" value="267"/>
</dbReference>
<dbReference type="FunCoup" id="Q7Z739">
    <property type="interactions" value="3875"/>
</dbReference>
<dbReference type="IntAct" id="Q7Z739">
    <property type="interactions" value="61"/>
</dbReference>
<dbReference type="MINT" id="Q7Z739"/>
<dbReference type="STRING" id="9606.ENSP00000478490"/>
<dbReference type="BindingDB" id="Q7Z739"/>
<dbReference type="ChEMBL" id="CHEMBL5169172"/>
<dbReference type="GlyConnect" id="1905">
    <property type="glycosylation" value="4 N-Linked glycans (2 sites), 1 O-GlcNAc glycan (1 site)"/>
</dbReference>
<dbReference type="GlyCosmos" id="Q7Z739">
    <property type="glycosylation" value="15 sites, 5 glycans"/>
</dbReference>
<dbReference type="GlyGen" id="Q7Z739">
    <property type="glycosylation" value="18 sites, 7 N-linked glycans (2 sites), 2 O-linked glycans (16 sites)"/>
</dbReference>
<dbReference type="iPTMnet" id="Q7Z739"/>
<dbReference type="MetOSite" id="Q7Z739"/>
<dbReference type="PhosphoSitePlus" id="Q7Z739"/>
<dbReference type="BioMuta" id="YTHDF3"/>
<dbReference type="DMDM" id="74738853"/>
<dbReference type="jPOST" id="Q7Z739"/>
<dbReference type="MassIVE" id="Q7Z739"/>
<dbReference type="PaxDb" id="9606-ENSP00000478490"/>
<dbReference type="PeptideAtlas" id="Q7Z739"/>
<dbReference type="ProteomicsDB" id="69483"/>
<dbReference type="Pumba" id="Q7Z739"/>
<dbReference type="Antibodypedia" id="24763">
    <property type="antibodies" value="139 antibodies from 22 providers"/>
</dbReference>
<dbReference type="DNASU" id="253943"/>
<dbReference type="Ensembl" id="ENST00000539294.6">
    <property type="protein sequence ID" value="ENSP00000473496.2"/>
    <property type="gene ID" value="ENSG00000185728.17"/>
</dbReference>
<dbReference type="GeneID" id="253943"/>
<dbReference type="KEGG" id="hsa:253943"/>
<dbReference type="MANE-Select" id="ENST00000539294.6">
    <property type="protein sequence ID" value="ENSP00000473496.2"/>
    <property type="RefSeq nucleotide sequence ID" value="NM_152758.6"/>
    <property type="RefSeq protein sequence ID" value="NP_689971.4"/>
</dbReference>
<dbReference type="UCSC" id="uc033bnj.2">
    <property type="organism name" value="human"/>
</dbReference>
<dbReference type="AGR" id="HGNC:26465"/>
<dbReference type="CTD" id="253943"/>
<dbReference type="DisGeNET" id="253943"/>
<dbReference type="GeneCards" id="YTHDF3"/>
<dbReference type="HGNC" id="HGNC:26465">
    <property type="gene designation" value="YTHDF3"/>
</dbReference>
<dbReference type="HPA" id="ENSG00000185728">
    <property type="expression patterns" value="Low tissue specificity"/>
</dbReference>
<dbReference type="MIM" id="618669">
    <property type="type" value="gene"/>
</dbReference>
<dbReference type="neXtProt" id="NX_Q7Z739"/>
<dbReference type="OpenTargets" id="ENSG00000185728"/>
<dbReference type="PharmGKB" id="PA134976395"/>
<dbReference type="VEuPathDB" id="HostDB:ENSG00000185728"/>
<dbReference type="eggNOG" id="KOG1901">
    <property type="taxonomic scope" value="Eukaryota"/>
</dbReference>
<dbReference type="GeneTree" id="ENSGT00940000158777"/>
<dbReference type="HOGENOM" id="CLU_022715_1_1_1"/>
<dbReference type="InParanoid" id="Q7Z739"/>
<dbReference type="OMA" id="GAYRSMG"/>
<dbReference type="OrthoDB" id="306690at2759"/>
<dbReference type="PAN-GO" id="Q7Z739">
    <property type="GO annotations" value="4 GO annotations based on evolutionary models"/>
</dbReference>
<dbReference type="PhylomeDB" id="Q7Z739"/>
<dbReference type="PathwayCommons" id="Q7Z739"/>
<dbReference type="SignaLink" id="Q7Z739"/>
<dbReference type="BioGRID-ORCS" id="253943">
    <property type="hits" value="11 hits in 320 CRISPR screens"/>
</dbReference>
<dbReference type="CD-CODE" id="232F8A39">
    <property type="entry name" value="P-body"/>
</dbReference>
<dbReference type="CD-CODE" id="D8E9712B">
    <property type="entry name" value="Neuronal RNP granule"/>
</dbReference>
<dbReference type="CD-CODE" id="DEE660B4">
    <property type="entry name" value="Stress granule"/>
</dbReference>
<dbReference type="ChiTaRS" id="YTHDF3">
    <property type="organism name" value="human"/>
</dbReference>
<dbReference type="GeneWiki" id="YTHDF3"/>
<dbReference type="GenomeRNAi" id="253943"/>
<dbReference type="Pharos" id="Q7Z739">
    <property type="development level" value="Tbio"/>
</dbReference>
<dbReference type="PRO" id="PR:Q7Z739"/>
<dbReference type="Proteomes" id="UP000005640">
    <property type="component" value="Chromosome 8"/>
</dbReference>
<dbReference type="RNAct" id="Q7Z739">
    <property type="molecule type" value="protein"/>
</dbReference>
<dbReference type="Bgee" id="ENSG00000185728">
    <property type="expression patterns" value="Expressed in endothelial cell and 214 other cell types or tissues"/>
</dbReference>
<dbReference type="ExpressionAtlas" id="Q7Z739">
    <property type="expression patterns" value="baseline and differential"/>
</dbReference>
<dbReference type="GO" id="GO:0005737">
    <property type="term" value="C:cytoplasm"/>
    <property type="evidence" value="ECO:0000314"/>
    <property type="project" value="UniProtKB"/>
</dbReference>
<dbReference type="GO" id="GO:0010494">
    <property type="term" value="C:cytoplasmic stress granule"/>
    <property type="evidence" value="ECO:0000314"/>
    <property type="project" value="UniProtKB"/>
</dbReference>
<dbReference type="GO" id="GO:0005829">
    <property type="term" value="C:cytosol"/>
    <property type="evidence" value="ECO:0000304"/>
    <property type="project" value="UniProtKB"/>
</dbReference>
<dbReference type="GO" id="GO:0000932">
    <property type="term" value="C:P-body"/>
    <property type="evidence" value="ECO:0000314"/>
    <property type="project" value="UniProtKB"/>
</dbReference>
<dbReference type="GO" id="GO:0003729">
    <property type="term" value="F:mRNA binding"/>
    <property type="evidence" value="ECO:0000318"/>
    <property type="project" value="GO_Central"/>
</dbReference>
<dbReference type="GO" id="GO:1990247">
    <property type="term" value="F:N6-methyladenosine-containing RNA reader activity"/>
    <property type="evidence" value="ECO:0000314"/>
    <property type="project" value="UniProtKB"/>
</dbReference>
<dbReference type="GO" id="GO:0043022">
    <property type="term" value="F:ribosome binding"/>
    <property type="evidence" value="ECO:0000314"/>
    <property type="project" value="UniProtKB"/>
</dbReference>
<dbReference type="GO" id="GO:0003723">
    <property type="term" value="F:RNA binding"/>
    <property type="evidence" value="ECO:0000314"/>
    <property type="project" value="UniProtKB"/>
</dbReference>
<dbReference type="GO" id="GO:0061157">
    <property type="term" value="P:mRNA destabilization"/>
    <property type="evidence" value="ECO:0000314"/>
    <property type="project" value="UniProtKB"/>
</dbReference>
<dbReference type="GO" id="GO:0060339">
    <property type="term" value="P:negative regulation of type I interferon-mediated signaling pathway"/>
    <property type="evidence" value="ECO:0000250"/>
    <property type="project" value="UniProtKB"/>
</dbReference>
<dbReference type="GO" id="GO:0070925">
    <property type="term" value="P:organelle assembly"/>
    <property type="evidence" value="ECO:0000314"/>
    <property type="project" value="UniProtKB"/>
</dbReference>
<dbReference type="GO" id="GO:0045727">
    <property type="term" value="P:positive regulation of translation"/>
    <property type="evidence" value="ECO:0000315"/>
    <property type="project" value="UniProtKB"/>
</dbReference>
<dbReference type="GO" id="GO:0045948">
    <property type="term" value="P:positive regulation of translational initiation"/>
    <property type="evidence" value="ECO:0000314"/>
    <property type="project" value="UniProtKB"/>
</dbReference>
<dbReference type="GO" id="GO:0043488">
    <property type="term" value="P:regulation of mRNA stability"/>
    <property type="evidence" value="ECO:0000314"/>
    <property type="project" value="UniProtKB"/>
</dbReference>
<dbReference type="GO" id="GO:1901163">
    <property type="term" value="P:regulation of trophoblast cell migration"/>
    <property type="evidence" value="ECO:0000315"/>
    <property type="project" value="UniProtKB"/>
</dbReference>
<dbReference type="GO" id="GO:0034063">
    <property type="term" value="P:stress granule assembly"/>
    <property type="evidence" value="ECO:0000314"/>
    <property type="project" value="UniProtKB"/>
</dbReference>
<dbReference type="CDD" id="cd21134">
    <property type="entry name" value="YTH"/>
    <property type="match status" value="1"/>
</dbReference>
<dbReference type="FunFam" id="3.10.590.10:FF:000001">
    <property type="entry name" value="YTH domain family 1, isoform CRA_a"/>
    <property type="match status" value="1"/>
</dbReference>
<dbReference type="Gene3D" id="3.10.590.10">
    <property type="entry name" value="ph1033 like domains"/>
    <property type="match status" value="1"/>
</dbReference>
<dbReference type="InterPro" id="IPR007275">
    <property type="entry name" value="YTH_domain"/>
</dbReference>
<dbReference type="InterPro" id="IPR045168">
    <property type="entry name" value="YTH_prot"/>
</dbReference>
<dbReference type="PANTHER" id="PTHR12357:SF9">
    <property type="entry name" value="YTH DOMAIN-CONTAINING FAMILY PROTEIN 3"/>
    <property type="match status" value="1"/>
</dbReference>
<dbReference type="PANTHER" id="PTHR12357">
    <property type="entry name" value="YTH YT521-B HOMOLOGY DOMAIN-CONTAINING"/>
    <property type="match status" value="1"/>
</dbReference>
<dbReference type="Pfam" id="PF04146">
    <property type="entry name" value="YTH"/>
    <property type="match status" value="1"/>
</dbReference>
<dbReference type="SUPFAM" id="SSF81995">
    <property type="entry name" value="beta-sandwich domain of Sec23/24"/>
    <property type="match status" value="1"/>
</dbReference>
<dbReference type="PROSITE" id="PS50882">
    <property type="entry name" value="YTH"/>
    <property type="match status" value="1"/>
</dbReference>
<sequence length="585" mass="63861">MSATSVDQRPKGQGNKVSVQNGSIHQKDAVNDDDFEPYLSSQTNQSNSYPPMSDPYMPSYYAPSIGFPYSLGEAAWSTAGDQPMPYLTTYGQMSNGEHHYIPDGVFSQPGALGNTPPFLGQHGFNFFPGNADFSTWGTSGSQGQSTQSSAYSSSYGYPPSSLGRAITDGQAGFGNDTLSKVPGISSIEQGMTGLKIGGDLTAAVTKTVGTALSSSGMTSIATNSVPPVSSAAPKPTSWAAIARKPAKPQPKLKPKGNVGIGGSAVPPPPIKHNMNIGTWDEKGSVVKAPPTQPVLPPQTIIQQPQPLIQPPPLVQSQLPQQQPQPPQPQQQQGPQPQAQPHQVQPQQQQLQNRWVAPRNRGAGFNQNNGAGSENFGLGVVPVSASPSSVEVHPVLEKLKAINNYNPKDFDWNLKNGRVFIIKSYSEDDIHRSIKYSIWCSTEHGNKRLDAAYRSLNGKGPLYLLFSVNGSGHFCGVAEMKSVVDYNAYAGVWSQDKWKGKFEVKWIFVKDVPNNQLRHIRLENNDNKPVTNSRDTQEVPLEKAKQVLKIIATFKHTTSIFDDFAHYEKRQEEEEAMRRERNRNKQ</sequence>
<feature type="initiator methionine" description="Removed" evidence="26 28">
    <location>
        <position position="1"/>
    </location>
</feature>
<feature type="chain" id="PRO_0000230991" description="YTH domain-containing family protein 3">
    <location>
        <begin position="2"/>
        <end position="585"/>
    </location>
</feature>
<feature type="domain" description="YTH" evidence="3">
    <location>
        <begin position="416"/>
        <end position="550"/>
    </location>
</feature>
<feature type="region of interest" description="Disordered" evidence="4">
    <location>
        <begin position="1"/>
        <end position="52"/>
    </location>
</feature>
<feature type="region of interest" description="Disordered" evidence="4">
    <location>
        <begin position="243"/>
        <end position="277"/>
    </location>
</feature>
<feature type="region of interest" description="Disordered" evidence="4">
    <location>
        <begin position="304"/>
        <end position="351"/>
    </location>
</feature>
<feature type="compositionally biased region" description="Polar residues" evidence="4">
    <location>
        <begin position="15"/>
        <end position="24"/>
    </location>
</feature>
<feature type="compositionally biased region" description="Basic residues" evidence="4">
    <location>
        <begin position="244"/>
        <end position="254"/>
    </location>
</feature>
<feature type="compositionally biased region" description="Low complexity" evidence="4">
    <location>
        <begin position="329"/>
        <end position="351"/>
    </location>
</feature>
<feature type="binding site" evidence="17 25">
    <location>
        <begin position="422"/>
        <end position="424"/>
    </location>
    <ligand>
        <name>RNA</name>
        <dbReference type="ChEBI" id="CHEBI:33697"/>
    </ligand>
    <ligandPart>
        <name>N(6)-methyladenosine 5'-phosphate residue</name>
        <dbReference type="ChEBI" id="CHEBI:74449"/>
    </ligandPart>
</feature>
<feature type="binding site" evidence="2">
    <location>
        <position position="428"/>
    </location>
    <ligand>
        <name>RNA</name>
        <dbReference type="ChEBI" id="CHEBI:33697"/>
    </ligand>
    <ligandPart>
        <name>N(6)-methyladenosine 5'-phosphate residue</name>
        <dbReference type="ChEBI" id="CHEBI:74449"/>
    </ligandPart>
</feature>
<feature type="binding site" evidence="17 25">
    <location>
        <begin position="438"/>
        <end position="439"/>
    </location>
    <ligand>
        <name>RNA</name>
        <dbReference type="ChEBI" id="CHEBI:33697"/>
    </ligand>
    <ligandPart>
        <name>N(6)-methyladenosine 5'-phosphate residue</name>
        <dbReference type="ChEBI" id="CHEBI:74449"/>
    </ligandPart>
</feature>
<feature type="binding site" evidence="2">
    <location>
        <position position="468"/>
    </location>
    <ligand>
        <name>RNA</name>
        <dbReference type="ChEBI" id="CHEBI:33697"/>
    </ligand>
    <ligandPart>
        <name>N(6)-methyladenosine 5'-phosphate residue</name>
        <dbReference type="ChEBI" id="CHEBI:74449"/>
    </ligandPart>
</feature>
<feature type="binding site" evidence="17 25">
    <location>
        <position position="492"/>
    </location>
    <ligand>
        <name>RNA</name>
        <dbReference type="ChEBI" id="CHEBI:33697"/>
    </ligand>
    <ligandPart>
        <name>N(6)-methyladenosine 5'-phosphate residue</name>
        <dbReference type="ChEBI" id="CHEBI:74449"/>
    </ligandPart>
</feature>
<feature type="binding site" evidence="17 25">
    <location>
        <position position="497"/>
    </location>
    <ligand>
        <name>RNA</name>
        <dbReference type="ChEBI" id="CHEBI:33697"/>
    </ligand>
    <ligandPart>
        <name>N(6)-methyladenosine 5'-phosphate residue</name>
        <dbReference type="ChEBI" id="CHEBI:74449"/>
    </ligandPart>
</feature>
<feature type="site" description="(Microbial infection) Cleavage; by HIV-1 protease" evidence="13">
    <location>
        <begin position="157"/>
        <end position="158"/>
    </location>
</feature>
<feature type="site" description="(Microbial infection) Cleavage; by HIV-1 protease" evidence="23">
    <location>
        <begin position="538"/>
        <end position="539"/>
    </location>
</feature>
<feature type="site" description="(Microbial infection) Cleavage; by HIV-1 protease" evidence="23">
    <location>
        <begin position="570"/>
        <end position="571"/>
    </location>
</feature>
<feature type="modified residue" description="N-acetylserine" evidence="26 28">
    <location>
        <position position="2"/>
    </location>
</feature>
<feature type="modified residue" description="Phosphoserine" evidence="27">
    <location>
        <position position="23"/>
    </location>
</feature>
<feature type="sequence conflict" description="In Ref. 2; CAH56224." evidence="21" ref="2">
    <original>S</original>
    <variation>R</variation>
    <location>
        <position position="139"/>
    </location>
</feature>
<feature type="sequence conflict" description="In Ref. 2; CAH56224." evidence="21" ref="2">
    <original>P</original>
    <variation>S</variation>
    <location>
        <position position="381"/>
    </location>
</feature>
<feature type="sequence conflict" description="In Ref. 2; CAH56480." evidence="21" ref="2">
    <original>S</original>
    <variation>P</variation>
    <location>
        <position position="532"/>
    </location>
</feature>
<feature type="helix" evidence="29">
    <location>
        <begin position="393"/>
        <end position="401"/>
    </location>
</feature>
<feature type="strand" evidence="29">
    <location>
        <begin position="417"/>
        <end position="424"/>
    </location>
</feature>
<feature type="helix" evidence="29">
    <location>
        <begin position="426"/>
        <end position="435"/>
    </location>
</feature>
<feature type="helix" evidence="29">
    <location>
        <begin position="442"/>
        <end position="455"/>
    </location>
</feature>
<feature type="strand" evidence="29">
    <location>
        <begin position="461"/>
        <end position="467"/>
    </location>
</feature>
<feature type="strand" evidence="29">
    <location>
        <begin position="470"/>
        <end position="479"/>
    </location>
</feature>
<feature type="strand" evidence="29">
    <location>
        <begin position="484"/>
        <end position="488"/>
    </location>
</feature>
<feature type="strand" evidence="29">
    <location>
        <begin position="492"/>
        <end position="494"/>
    </location>
</feature>
<feature type="strand" evidence="29">
    <location>
        <begin position="498"/>
        <end position="512"/>
    </location>
</feature>
<feature type="helix" evidence="29">
    <location>
        <begin position="513"/>
        <end position="515"/>
    </location>
</feature>
<feature type="turn" evidence="29">
    <location>
        <begin position="516"/>
        <end position="518"/>
    </location>
</feature>
<feature type="turn" evidence="29">
    <location>
        <begin position="522"/>
        <end position="526"/>
    </location>
</feature>
<feature type="helix" evidence="29">
    <location>
        <begin position="529"/>
        <end position="531"/>
    </location>
</feature>
<feature type="helix" evidence="29">
    <location>
        <begin position="540"/>
        <end position="552"/>
    </location>
</feature>
<feature type="helix" evidence="29">
    <location>
        <begin position="559"/>
        <end position="562"/>
    </location>
</feature>
<feature type="helix" evidence="29">
    <location>
        <begin position="563"/>
        <end position="580"/>
    </location>
</feature>
<protein>
    <recommendedName>
        <fullName evidence="21">YTH domain-containing family protein 3</fullName>
        <shortName evidence="19 20">DF3</shortName>
    </recommendedName>
</protein>
<proteinExistence type="evidence at protein level"/>
<name>YTHD3_HUMAN</name>
<accession>Q7Z739</accession>
<accession>B3KXL4</accession>
<accession>Q63Z37</accession>
<accession>Q659A3</accession>
<comment type="function">
    <text evidence="1 5 6 8 9 10 11 12 14 15 16">Specifically recognizes and binds N6-methyladenosine (m6A)-containing RNAs, and regulates their stability (PubMed:28106072, PubMed:28106076, PubMed:28281539, PubMed:32492408). M6A is a modification present at internal sites of mRNAs and some non-coding RNAs and plays a role in mRNA stability and processing (PubMed:22575960, PubMed:24284625, PubMed:28106072, PubMed:28281539, PubMed:32492408). Acts as a regulator of mRNA stability by promoting degradation of m6A-containing mRNAs via interaction with the CCR4-NOT complex or PAN3 (PubMed:32492408). The YTHDF paralogs (YTHDF1, YTHDF2 and YTHDF3) share m6A-containing mRNAs targets and act redundantly to mediate mRNA degradation and cellular differentiation (PubMed:28106072, PubMed:28106076, PubMed:32492408). Acts as a negative regulator of type I interferon response by down-regulating interferon-stimulated genes (ISGs) expression: acts by binding to FOXO3 mRNAs (By similarity). Binds to FOXO3 mRNAs independently of METTL3-mediated m6A modification (By similarity). Can also act as a regulator of mRNA stability in cooperation with YTHDF2 by binding to m6A-containing mRNA and promoting their degradation (PubMed:28106072). Recognizes and binds m6A-containing circular RNAs (circRNAs); circRNAs are generated through back-splicing of pre-mRNAs, a non-canonical splicing process promoted by dsRNA structures across circularizing exons (PubMed:28281539). Promotes formation of phase-separated membraneless compartments, such as P-bodies or stress granules, by undergoing liquid-liquid phase separation upon binding to mRNAs containing multiple m6A-modified residues: polymethylated mRNAs act as a multivalent scaffold for the binding of YTHDF proteins, juxtaposing their disordered regions and thereby leading to phase separation (PubMed:31292544, PubMed:31388144, PubMed:32451507). The resulting mRNA-YTHDF complexes then partition into different endogenous phase-separated membraneless compartments, such as P-bodies, stress granules or neuronal RNA granules (PubMed:31292544). May also recognize and bind N1-methyladenosine (m1A)-containing mRNAs: inhibits trophoblast invasion by binding to m1A-methylated transcripts of IGF1R, promoting their degradation (PubMed:32194978).</text>
</comment>
<comment type="function">
    <text evidence="13">Has some antiviral activity against HIV-1 virus: incorporated into HIV-1 particles in a nucleocapsid-dependent manner and reduces viral infectivity in the next cycle of infection (PubMed:32053707). May interfere with this early step of the viral life cycle by binding to N6-methyladenosine (m6A) modified sites on the HIV-1 RNA genome (PubMed:32053707).</text>
</comment>
<comment type="subunit">
    <text evidence="1 8 16">Interacts with CNOT1; promoting recruitment of the CCR4-NOT complex (PubMed:32492408). Interacts with YTHDF1 (PubMed:28106072). Interacts with YTHDF2 (PubMed:28106072). Interacts with PAN3 (By similarity).</text>
</comment>
<comment type="interaction">
    <interactant intactId="EBI-2849837">
        <id>Q7Z739</id>
    </interactant>
    <interactant intactId="EBI-718246">
        <id>Q9UNN5</id>
        <label>FAF1</label>
    </interactant>
    <organismsDiffer>false</organismsDiffer>
    <experiments>3</experiments>
</comment>
<comment type="interaction">
    <interactant intactId="EBI-2849837">
        <id>Q7Z739</id>
    </interactant>
    <interactant intactId="EBI-1051237">
        <id>Q9BYJ9</id>
        <label>YTHDF1</label>
    </interactant>
    <organismsDiffer>false</organismsDiffer>
    <experiments>3</experiments>
</comment>
<comment type="interaction">
    <interactant intactId="EBI-2849837">
        <id>Q7Z739</id>
    </interactant>
    <interactant intactId="EBI-6179727">
        <id>PRO_0000038596</id>
        <label>gag</label>
        <dbReference type="UniProtKB" id="P04591"/>
    </interactant>
    <organismsDiffer>true</organismsDiffer>
    <experiments>2</experiments>
</comment>
<comment type="subcellular location">
    <subcellularLocation>
        <location evidence="16 22">Cytoplasm</location>
        <location evidence="16 22">Cytosol</location>
    </subcellularLocation>
    <subcellularLocation>
        <location evidence="16">Cytoplasm</location>
        <location evidence="16">P-body</location>
    </subcellularLocation>
    <subcellularLocation>
        <location evidence="15">Cytoplasm</location>
        <location evidence="15">Stress granule</location>
    </subcellularLocation>
</comment>
<comment type="induction">
    <text evidence="7">Following heat shock stress.</text>
</comment>
<comment type="domain">
    <text evidence="11">The disordered regions have the ability to interact with each other and to 'phase separate' into liquid droplets within the cytosol following binding to mRNAs containing multiple m6A-modified residues (PubMed:31292544). This leads to the partition of m6A-containing mRNAs into membraneless compartments, where mRNAs may be stored, degraded or used to transport mRNAs to dendritic arbors in neurons (PubMed:31292544).</text>
</comment>
<comment type="PTM">
    <text evidence="13">(Microbial infection) Proteolytically cleaved by HIV-1 protease when incorporated into HIV-1 particles in a nucleocapsid-dependent-manner. Cleavage by HIV-1 protease probably ensures optimal infectivity of the mature virion.</text>
</comment>
<comment type="similarity">
    <text evidence="21">Belongs to the YTHDF family. YTHDF3 subfamily.</text>
</comment>
<comment type="caution">
    <text evidence="8 9 10 16">Was initially reported to act as a regulator of mRNA translation efficiency in cooperation with YTHDF1 by binding to m6A-containing mRNAs and interacting with 40S and 60S ribosome subunits (PubMed:28106072, PubMed:28106076, PubMed:28281539). These studies suggested that the 3 different paralogs (YTHDF1, YTHDF2 and YTHDF3) have unique functions with limited redundancy (PubMed:28106072, PubMed:28106076, PubMed:28281539). However, later studies showed that YTHDF1, YTHDF2 and YTHDF3 paralogs have redundant functions to a profound extent and directly promote degradation of m6A-containing mRNAs (PubMed:32492408). The effect on translation efficiency observed earlier is probably indirect (PubMed:32492408).</text>
</comment>
<comment type="online information" name="Protein Spotlight">
    <link uri="https://www.proteinspotlight.org/back_issues/238/"/>
    <text>On the benefits of disorder - Issue 238 of August 2021</text>
</comment>
<organism>
    <name type="scientific">Homo sapiens</name>
    <name type="common">Human</name>
    <dbReference type="NCBI Taxonomy" id="9606"/>
    <lineage>
        <taxon>Eukaryota</taxon>
        <taxon>Metazoa</taxon>
        <taxon>Chordata</taxon>
        <taxon>Craniata</taxon>
        <taxon>Vertebrata</taxon>
        <taxon>Euteleostomi</taxon>
        <taxon>Mammalia</taxon>
        <taxon>Eutheria</taxon>
        <taxon>Euarchontoglires</taxon>
        <taxon>Primates</taxon>
        <taxon>Haplorrhini</taxon>
        <taxon>Catarrhini</taxon>
        <taxon>Hominidae</taxon>
        <taxon>Homo</taxon>
    </lineage>
</organism>
<evidence type="ECO:0000250" key="1">
    <source>
        <dbReference type="UniProtKB" id="Q8BYK6"/>
    </source>
</evidence>
<evidence type="ECO:0000250" key="2">
    <source>
        <dbReference type="UniProtKB" id="Q9Y5A9"/>
    </source>
</evidence>
<evidence type="ECO:0000255" key="3">
    <source>
        <dbReference type="PROSITE-ProRule" id="PRU00225"/>
    </source>
</evidence>
<evidence type="ECO:0000256" key="4">
    <source>
        <dbReference type="SAM" id="MobiDB-lite"/>
    </source>
</evidence>
<evidence type="ECO:0000269" key="5">
    <source>
    </source>
</evidence>
<evidence type="ECO:0000269" key="6">
    <source>
    </source>
</evidence>
<evidence type="ECO:0000269" key="7">
    <source>
    </source>
</evidence>
<evidence type="ECO:0000269" key="8">
    <source>
    </source>
</evidence>
<evidence type="ECO:0000269" key="9">
    <source>
    </source>
</evidence>
<evidence type="ECO:0000269" key="10">
    <source>
    </source>
</evidence>
<evidence type="ECO:0000269" key="11">
    <source>
    </source>
</evidence>
<evidence type="ECO:0000269" key="12">
    <source>
    </source>
</evidence>
<evidence type="ECO:0000269" key="13">
    <source>
    </source>
</evidence>
<evidence type="ECO:0000269" key="14">
    <source>
    </source>
</evidence>
<evidence type="ECO:0000269" key="15">
    <source>
    </source>
</evidence>
<evidence type="ECO:0000269" key="16">
    <source>
    </source>
</evidence>
<evidence type="ECO:0000269" key="17">
    <source>
    </source>
</evidence>
<evidence type="ECO:0000303" key="18">
    <source>
    </source>
</evidence>
<evidence type="ECO:0000303" key="19">
    <source>
    </source>
</evidence>
<evidence type="ECO:0000303" key="20">
    <source>
    </source>
</evidence>
<evidence type="ECO:0000305" key="21"/>
<evidence type="ECO:0000305" key="22">
    <source>
    </source>
</evidence>
<evidence type="ECO:0000305" key="23">
    <source>
    </source>
</evidence>
<evidence type="ECO:0000312" key="24">
    <source>
        <dbReference type="HGNC" id="HGNC:26465"/>
    </source>
</evidence>
<evidence type="ECO:0007744" key="25">
    <source>
        <dbReference type="PDB" id="6ZOT"/>
    </source>
</evidence>
<evidence type="ECO:0007744" key="26">
    <source>
    </source>
</evidence>
<evidence type="ECO:0007744" key="27">
    <source>
    </source>
</evidence>
<evidence type="ECO:0007744" key="28">
    <source>
    </source>
</evidence>
<evidence type="ECO:0007829" key="29">
    <source>
        <dbReference type="PDB" id="8BS6"/>
    </source>
</evidence>
<gene>
    <name evidence="18 24" type="primary">YTHDF3</name>
</gene>
<keyword id="KW-0002">3D-structure</keyword>
<keyword id="KW-0007">Acetylation</keyword>
<keyword id="KW-0963">Cytoplasm</keyword>
<keyword id="KW-0903">Direct protein sequencing</keyword>
<keyword id="KW-0945">Host-virus interaction</keyword>
<keyword id="KW-0597">Phosphoprotein</keyword>
<keyword id="KW-1267">Proteomics identification</keyword>
<keyword id="KW-1185">Reference proteome</keyword>
<keyword id="KW-0694">RNA-binding</keyword>
<reference key="1">
    <citation type="journal article" date="2004" name="Nat. Genet.">
        <title>Complete sequencing and characterization of 21,243 full-length human cDNAs.</title>
        <authorList>
            <person name="Ota T."/>
            <person name="Suzuki Y."/>
            <person name="Nishikawa T."/>
            <person name="Otsuki T."/>
            <person name="Sugiyama T."/>
            <person name="Irie R."/>
            <person name="Wakamatsu A."/>
            <person name="Hayashi K."/>
            <person name="Sato H."/>
            <person name="Nagai K."/>
            <person name="Kimura K."/>
            <person name="Makita H."/>
            <person name="Sekine M."/>
            <person name="Obayashi M."/>
            <person name="Nishi T."/>
            <person name="Shibahara T."/>
            <person name="Tanaka T."/>
            <person name="Ishii S."/>
            <person name="Yamamoto J."/>
            <person name="Saito K."/>
            <person name="Kawai Y."/>
            <person name="Isono Y."/>
            <person name="Nakamura Y."/>
            <person name="Nagahari K."/>
            <person name="Murakami K."/>
            <person name="Yasuda T."/>
            <person name="Iwayanagi T."/>
            <person name="Wagatsuma M."/>
            <person name="Shiratori A."/>
            <person name="Sudo H."/>
            <person name="Hosoiri T."/>
            <person name="Kaku Y."/>
            <person name="Kodaira H."/>
            <person name="Kondo H."/>
            <person name="Sugawara M."/>
            <person name="Takahashi M."/>
            <person name="Kanda K."/>
            <person name="Yokoi T."/>
            <person name="Furuya T."/>
            <person name="Kikkawa E."/>
            <person name="Omura Y."/>
            <person name="Abe K."/>
            <person name="Kamihara K."/>
            <person name="Katsuta N."/>
            <person name="Sato K."/>
            <person name="Tanikawa M."/>
            <person name="Yamazaki M."/>
            <person name="Ninomiya K."/>
            <person name="Ishibashi T."/>
            <person name="Yamashita H."/>
            <person name="Murakawa K."/>
            <person name="Fujimori K."/>
            <person name="Tanai H."/>
            <person name="Kimata M."/>
            <person name="Watanabe M."/>
            <person name="Hiraoka S."/>
            <person name="Chiba Y."/>
            <person name="Ishida S."/>
            <person name="Ono Y."/>
            <person name="Takiguchi S."/>
            <person name="Watanabe S."/>
            <person name="Yosida M."/>
            <person name="Hotuta T."/>
            <person name="Kusano J."/>
            <person name="Kanehori K."/>
            <person name="Takahashi-Fujii A."/>
            <person name="Hara H."/>
            <person name="Tanase T.-O."/>
            <person name="Nomura Y."/>
            <person name="Togiya S."/>
            <person name="Komai F."/>
            <person name="Hara R."/>
            <person name="Takeuchi K."/>
            <person name="Arita M."/>
            <person name="Imose N."/>
            <person name="Musashino K."/>
            <person name="Yuuki H."/>
            <person name="Oshima A."/>
            <person name="Sasaki N."/>
            <person name="Aotsuka S."/>
            <person name="Yoshikawa Y."/>
            <person name="Matsunawa H."/>
            <person name="Ichihara T."/>
            <person name="Shiohata N."/>
            <person name="Sano S."/>
            <person name="Moriya S."/>
            <person name="Momiyama H."/>
            <person name="Satoh N."/>
            <person name="Takami S."/>
            <person name="Terashima Y."/>
            <person name="Suzuki O."/>
            <person name="Nakagawa S."/>
            <person name="Senoh A."/>
            <person name="Mizoguchi H."/>
            <person name="Goto Y."/>
            <person name="Shimizu F."/>
            <person name="Wakebe H."/>
            <person name="Hishigaki H."/>
            <person name="Watanabe T."/>
            <person name="Sugiyama A."/>
            <person name="Takemoto M."/>
            <person name="Kawakami B."/>
            <person name="Yamazaki M."/>
            <person name="Watanabe K."/>
            <person name="Kumagai A."/>
            <person name="Itakura S."/>
            <person name="Fukuzumi Y."/>
            <person name="Fujimori Y."/>
            <person name="Komiyama M."/>
            <person name="Tashiro H."/>
            <person name="Tanigami A."/>
            <person name="Fujiwara T."/>
            <person name="Ono T."/>
            <person name="Yamada K."/>
            <person name="Fujii Y."/>
            <person name="Ozaki K."/>
            <person name="Hirao M."/>
            <person name="Ohmori Y."/>
            <person name="Kawabata A."/>
            <person name="Hikiji T."/>
            <person name="Kobatake N."/>
            <person name="Inagaki H."/>
            <person name="Ikema Y."/>
            <person name="Okamoto S."/>
            <person name="Okitani R."/>
            <person name="Kawakami T."/>
            <person name="Noguchi S."/>
            <person name="Itoh T."/>
            <person name="Shigeta K."/>
            <person name="Senba T."/>
            <person name="Matsumura K."/>
            <person name="Nakajima Y."/>
            <person name="Mizuno T."/>
            <person name="Morinaga M."/>
            <person name="Sasaki M."/>
            <person name="Togashi T."/>
            <person name="Oyama M."/>
            <person name="Hata H."/>
            <person name="Watanabe M."/>
            <person name="Komatsu T."/>
            <person name="Mizushima-Sugano J."/>
            <person name="Satoh T."/>
            <person name="Shirai Y."/>
            <person name="Takahashi Y."/>
            <person name="Nakagawa K."/>
            <person name="Okumura K."/>
            <person name="Nagase T."/>
            <person name="Nomura N."/>
            <person name="Kikuchi H."/>
            <person name="Masuho Y."/>
            <person name="Yamashita R."/>
            <person name="Nakai K."/>
            <person name="Yada T."/>
            <person name="Nakamura Y."/>
            <person name="Ohara O."/>
            <person name="Isogai T."/>
            <person name="Sugano S."/>
        </authorList>
    </citation>
    <scope>NUCLEOTIDE SEQUENCE [LARGE SCALE MRNA]</scope>
    <source>
        <tissue>Tongue</tissue>
    </source>
</reference>
<reference key="2">
    <citation type="journal article" date="2007" name="BMC Genomics">
        <title>The full-ORF clone resource of the German cDNA consortium.</title>
        <authorList>
            <person name="Bechtel S."/>
            <person name="Rosenfelder H."/>
            <person name="Duda A."/>
            <person name="Schmidt C.P."/>
            <person name="Ernst U."/>
            <person name="Wellenreuther R."/>
            <person name="Mehrle A."/>
            <person name="Schuster C."/>
            <person name="Bahr A."/>
            <person name="Bloecker H."/>
            <person name="Heubner D."/>
            <person name="Hoerlein A."/>
            <person name="Michel G."/>
            <person name="Wedler H."/>
            <person name="Koehrer K."/>
            <person name="Ottenwaelder B."/>
            <person name="Poustka A."/>
            <person name="Wiemann S."/>
            <person name="Schupp I."/>
        </authorList>
    </citation>
    <scope>NUCLEOTIDE SEQUENCE [LARGE SCALE MRNA]</scope>
    <source>
        <tissue>Skeletal muscle</tissue>
        <tissue>Spinal cord</tissue>
    </source>
</reference>
<reference key="3">
    <citation type="submission" date="2005-07" db="EMBL/GenBank/DDBJ databases">
        <authorList>
            <person name="Mural R.J."/>
            <person name="Istrail S."/>
            <person name="Sutton G.G."/>
            <person name="Florea L."/>
            <person name="Halpern A.L."/>
            <person name="Mobarry C.M."/>
            <person name="Lippert R."/>
            <person name="Walenz B."/>
            <person name="Shatkay H."/>
            <person name="Dew I."/>
            <person name="Miller J.R."/>
            <person name="Flanigan M.J."/>
            <person name="Edwards N.J."/>
            <person name="Bolanos R."/>
            <person name="Fasulo D."/>
            <person name="Halldorsson B.V."/>
            <person name="Hannenhalli S."/>
            <person name="Turner R."/>
            <person name="Yooseph S."/>
            <person name="Lu F."/>
            <person name="Nusskern D.R."/>
            <person name="Shue B.C."/>
            <person name="Zheng X.H."/>
            <person name="Zhong F."/>
            <person name="Delcher A.L."/>
            <person name="Huson D.H."/>
            <person name="Kravitz S.A."/>
            <person name="Mouchard L."/>
            <person name="Reinert K."/>
            <person name="Remington K.A."/>
            <person name="Clark A.G."/>
            <person name="Waterman M.S."/>
            <person name="Eichler E.E."/>
            <person name="Adams M.D."/>
            <person name="Hunkapiller M.W."/>
            <person name="Myers E.W."/>
            <person name="Venter J.C."/>
        </authorList>
    </citation>
    <scope>NUCLEOTIDE SEQUENCE [LARGE SCALE GENOMIC DNA]</scope>
</reference>
<reference key="4">
    <citation type="journal article" date="2004" name="Genome Res.">
        <title>The status, quality, and expansion of the NIH full-length cDNA project: the Mammalian Gene Collection (MGC).</title>
        <authorList>
            <consortium name="The MGC Project Team"/>
        </authorList>
    </citation>
    <scope>NUCLEOTIDE SEQUENCE [LARGE SCALE MRNA]</scope>
    <source>
        <tissue>Testis</tissue>
    </source>
</reference>
<reference key="5">
    <citation type="submission" date="2008-03" db="UniProtKB">
        <authorList>
            <person name="Bienvenut W.V."/>
            <person name="Vousden K.H."/>
            <person name="Lukashchuk N."/>
        </authorList>
    </citation>
    <scope>PROTEIN SEQUENCE OF 256-271; 408-414 AND 534-542</scope>
    <scope>IDENTIFICATION BY MASS SPECTROMETRY</scope>
    <source>
        <tissue>Lung carcinoma</tissue>
    </source>
</reference>
<reference key="6">
    <citation type="journal article" date="2008" name="Proc. Natl. Acad. Sci. U.S.A.">
        <title>A quantitative atlas of mitotic phosphorylation.</title>
        <authorList>
            <person name="Dephoure N."/>
            <person name="Zhou C."/>
            <person name="Villen J."/>
            <person name="Beausoleil S.A."/>
            <person name="Bakalarski C.E."/>
            <person name="Elledge S.J."/>
            <person name="Gygi S.P."/>
        </authorList>
    </citation>
    <scope>IDENTIFICATION BY MASS SPECTROMETRY [LARGE SCALE ANALYSIS]</scope>
    <source>
        <tissue>Cervix carcinoma</tissue>
    </source>
</reference>
<reference key="7">
    <citation type="journal article" date="2009" name="Anal. Chem.">
        <title>Lys-N and trypsin cover complementary parts of the phosphoproteome in a refined SCX-based approach.</title>
        <authorList>
            <person name="Gauci S."/>
            <person name="Helbig A.O."/>
            <person name="Slijper M."/>
            <person name="Krijgsveld J."/>
            <person name="Heck A.J."/>
            <person name="Mohammed S."/>
        </authorList>
    </citation>
    <scope>ACETYLATION [LARGE SCALE ANALYSIS] AT SER-2</scope>
    <scope>CLEAVAGE OF INITIATOR METHIONINE [LARGE SCALE ANALYSIS]</scope>
    <scope>IDENTIFICATION BY MASS SPECTROMETRY [LARGE SCALE ANALYSIS]</scope>
</reference>
<reference key="8">
    <citation type="journal article" date="2010" name="Sci. Signal.">
        <title>Quantitative phosphoproteomics reveals widespread full phosphorylation site occupancy during mitosis.</title>
        <authorList>
            <person name="Olsen J.V."/>
            <person name="Vermeulen M."/>
            <person name="Santamaria A."/>
            <person name="Kumar C."/>
            <person name="Miller M.L."/>
            <person name="Jensen L.J."/>
            <person name="Gnad F."/>
            <person name="Cox J."/>
            <person name="Jensen T.S."/>
            <person name="Nigg E.A."/>
            <person name="Brunak S."/>
            <person name="Mann M."/>
        </authorList>
    </citation>
    <scope>PHOSPHORYLATION [LARGE SCALE ANALYSIS] AT SER-23</scope>
    <scope>IDENTIFICATION BY MASS SPECTROMETRY [LARGE SCALE ANALYSIS]</scope>
    <source>
        <tissue>Cervix carcinoma</tissue>
    </source>
</reference>
<reference key="9">
    <citation type="journal article" date="2011" name="BMC Syst. Biol.">
        <title>Initial characterization of the human central proteome.</title>
        <authorList>
            <person name="Burkard T.R."/>
            <person name="Planyavsky M."/>
            <person name="Kaupe I."/>
            <person name="Breitwieser F.P."/>
            <person name="Buerckstuemmer T."/>
            <person name="Bennett K.L."/>
            <person name="Superti-Furga G."/>
            <person name="Colinge J."/>
        </authorList>
    </citation>
    <scope>IDENTIFICATION BY MASS SPECTROMETRY [LARGE SCALE ANALYSIS]</scope>
</reference>
<reference key="10">
    <citation type="journal article" date="2012" name="Nature">
        <title>Topology of the human and mouse m6A RNA methylomes revealed by m6A-seq.</title>
        <authorList>
            <person name="Dominissini D."/>
            <person name="Moshitch-Moshkovitz S."/>
            <person name="Schwartz S."/>
            <person name="Salmon-Divon M."/>
            <person name="Ungar L."/>
            <person name="Osenberg S."/>
            <person name="Cesarkas K."/>
            <person name="Jacob-Hirsch J."/>
            <person name="Amariglio N."/>
            <person name="Kupiec M."/>
            <person name="Sorek R."/>
            <person name="Rechavi G."/>
        </authorList>
    </citation>
    <scope>RNA-BINDING</scope>
    <scope>FUNCTION</scope>
</reference>
<reference key="11">
    <citation type="journal article" date="2012" name="Proc. Natl. Acad. Sci. U.S.A.">
        <title>N-terminal acetylome analyses and functional insights of the N-terminal acetyltransferase NatB.</title>
        <authorList>
            <person name="Van Damme P."/>
            <person name="Lasa M."/>
            <person name="Polevoda B."/>
            <person name="Gazquez C."/>
            <person name="Elosegui-Artola A."/>
            <person name="Kim D.S."/>
            <person name="De Juan-Pardo E."/>
            <person name="Demeyer K."/>
            <person name="Hole K."/>
            <person name="Larrea E."/>
            <person name="Timmerman E."/>
            <person name="Prieto J."/>
            <person name="Arnesen T."/>
            <person name="Sherman F."/>
            <person name="Gevaert K."/>
            <person name="Aldabe R."/>
        </authorList>
    </citation>
    <scope>ACETYLATION [LARGE SCALE ANALYSIS] AT SER-2</scope>
    <scope>CLEAVAGE OF INITIATOR METHIONINE [LARGE SCALE ANALYSIS]</scope>
    <scope>IDENTIFICATION BY MASS SPECTROMETRY [LARGE SCALE ANALYSIS]</scope>
</reference>
<reference key="12">
    <citation type="journal article" date="2013" name="J. Proteome Res.">
        <title>Toward a comprehensive characterization of a human cancer cell phosphoproteome.</title>
        <authorList>
            <person name="Zhou H."/>
            <person name="Di Palma S."/>
            <person name="Preisinger C."/>
            <person name="Peng M."/>
            <person name="Polat A.N."/>
            <person name="Heck A.J."/>
            <person name="Mohammed S."/>
        </authorList>
    </citation>
    <scope>IDENTIFICATION BY MASS SPECTROMETRY [LARGE SCALE ANALYSIS]</scope>
    <source>
        <tissue>Erythroleukemia</tissue>
    </source>
</reference>
<reference key="13">
    <citation type="journal article" date="2014" name="Nature">
        <title>N-methyladenosine-dependent regulation of messenger RNA stability.</title>
        <authorList>
            <person name="Wang X."/>
            <person name="Lu Z."/>
            <person name="Gomez A."/>
            <person name="Hon G.C."/>
            <person name="Yue Y."/>
            <person name="Han D."/>
            <person name="Fu Y."/>
            <person name="Parisien M."/>
            <person name="Dai Q."/>
            <person name="Jia G."/>
            <person name="Ren B."/>
            <person name="Pan T."/>
            <person name="He C."/>
        </authorList>
    </citation>
    <scope>RNA-BINDING</scope>
    <scope>FUNCTION</scope>
</reference>
<reference key="14">
    <citation type="journal article" date="2015" name="Nature">
        <title>Dynamic m(6)A mRNA methylation directs translational control of heat shock response.</title>
        <authorList>
            <person name="Zhou J."/>
            <person name="Wan J."/>
            <person name="Gao X."/>
            <person name="Zhang X."/>
            <person name="Jaffrey S.R."/>
            <person name="Qian S.B."/>
        </authorList>
    </citation>
    <scope>INDUCTION</scope>
</reference>
<reference key="15">
    <citation type="journal article" date="2017" name="Cell Res.">
        <title>YTHDF3 facilitates translation and decay of N(6)-methyladenosine-modified RNA.</title>
        <authorList>
            <person name="Shi H."/>
            <person name="Wang X."/>
            <person name="Lu Z."/>
            <person name="Zhao B.S."/>
            <person name="Ma H."/>
            <person name="Hsu P.J."/>
            <person name="Liu C."/>
            <person name="He C."/>
        </authorList>
    </citation>
    <scope>RNA-BINDING</scope>
    <scope>FUNCTION</scope>
    <scope>SUBCELLULAR LOCATION</scope>
    <scope>INTERACTION WITH YTHDF1 AND YTHDF2</scope>
</reference>
<reference key="16">
    <citation type="journal article" date="2017" name="Cell Res.">
        <title>Cytoplasmic m(6)A reader YTHDF3 promotes mRNA translation.</title>
        <authorList>
            <person name="Li A."/>
            <person name="Chen Y.S."/>
            <person name="Ping X.L."/>
            <person name="Yang X."/>
            <person name="Xiao W."/>
            <person name="Yang Y."/>
            <person name="Sun H.Y."/>
            <person name="Zhu Q."/>
            <person name="Baidya P."/>
            <person name="Wang X."/>
            <person name="Bhattarai D.P."/>
            <person name="Zhao Y.L."/>
            <person name="Sun B.F."/>
            <person name="Yang Y.G."/>
        </authorList>
    </citation>
    <scope>RNA-BINDING</scope>
    <scope>FUNCTION</scope>
</reference>
<reference key="17">
    <citation type="journal article" date="2017" name="Cell Res.">
        <title>Extensive translation of circular RNAs driven by N(6)-methyladenosine.</title>
        <authorList>
            <person name="Yang Y."/>
            <person name="Fan X."/>
            <person name="Mao M."/>
            <person name="Song X."/>
            <person name="Wu P."/>
            <person name="Zhang Y."/>
            <person name="Jin Y."/>
            <person name="Yang Y."/>
            <person name="Chen L."/>
            <person name="Wang Y."/>
            <person name="Wong C.C."/>
            <person name="Xiao X."/>
            <person name="Wang Z."/>
        </authorList>
    </citation>
    <scope>RNA-BINDING</scope>
    <scope>FUNCTION</scope>
</reference>
<reference key="18">
    <citation type="journal article" date="2019" name="Cell Res.">
        <title>Multivalent m6A motifs promote phase separation of YTHDF proteins.</title>
        <authorList>
            <person name="Gao Y."/>
            <person name="Pei G."/>
            <person name="Li D."/>
            <person name="Li R."/>
            <person name="Shao Y."/>
            <person name="Zhang Q.C."/>
            <person name="Li P."/>
        </authorList>
    </citation>
    <scope>FUNCTION</scope>
</reference>
<reference key="19">
    <citation type="journal article" date="2019" name="Nature">
        <title>m6A enhances the phase separation potential of mRNA.</title>
        <authorList>
            <person name="Ries R.J."/>
            <person name="Zaccara S."/>
            <person name="Klein P."/>
            <person name="Olarerin-George A."/>
            <person name="Namkoong S."/>
            <person name="Pickering B.F."/>
            <person name="Patil D.P."/>
            <person name="Kwak H."/>
            <person name="Lee J.H."/>
            <person name="Jaffrey S.R."/>
        </authorList>
    </citation>
    <scope>FUNCTION</scope>
    <scope>DOMAIN</scope>
</reference>
<reference key="20">
    <citation type="journal article" date="2020" name="Cell">
        <title>A unified model for the function of YTHDF proteins in regulating m6A-modified mRNA.</title>
        <authorList>
            <person name="Zaccara S."/>
            <person name="Jaffrey S.R."/>
        </authorList>
    </citation>
    <scope>FUNCTION</scope>
    <scope>SUBCELLULAR LOCATION</scope>
    <scope>INTERACTION WITH THE CCR4-NOT COMPLEX</scope>
</reference>
<reference key="21">
    <citation type="journal article" date="2020" name="Cell Discov.">
        <title>Cytoplasmic m1A reader YTHDF3 inhibits trophoblast invasion by downregulation of m1A-methylated IGF1R.</title>
        <authorList>
            <person name="Zheng Q."/>
            <person name="Gan H."/>
            <person name="Yang F."/>
            <person name="Yao Y."/>
            <person name="Hao F."/>
            <person name="Hong L."/>
            <person name="Jin L."/>
        </authorList>
    </citation>
    <scope>FUNCTION</scope>
</reference>
<reference key="22">
    <citation type="journal article" date="2020" name="Nat. Chem. Biol.">
        <title>m6A-binding YTHDF proteins promote stress granule formation.</title>
        <authorList>
            <person name="Fu Y."/>
            <person name="Zhuang X."/>
        </authorList>
    </citation>
    <scope>FUNCTION</scope>
    <scope>SUBCELLULAR LOCATION</scope>
</reference>
<reference key="23">
    <citation type="journal article" date="2020" name="PLoS Pathog.">
        <title>HIV protease cleaves the antiviral m6A reader protein YTHDF3 in the viral particle.</title>
        <authorList>
            <person name="Jurczyszak D."/>
            <person name="Zhang W."/>
            <person name="Terry S.N."/>
            <person name="Kehrer T."/>
            <person name="Bermudez Gonzalez M.C."/>
            <person name="McGregor E."/>
            <person name="Mulder L.C.F."/>
            <person name="Eckwahl M.J."/>
            <person name="Pan T."/>
            <person name="Simon V."/>
        </authorList>
    </citation>
    <scope>PROTEOLYTIC CLEAVAGE (MICROBIAL INFECTION)</scope>
</reference>
<reference evidence="25" key="24">
    <citation type="journal article" date="2020" name="J. Chem. Inf. Model.">
        <title>Structural and dynamic insights into redundant function of YTHDF proteins.</title>
        <authorList>
            <person name="Li Y."/>
            <person name="Bedi R.K."/>
            <person name="Moroz-Omori E.V."/>
            <person name="Caflisch A."/>
        </authorList>
    </citation>
    <scope>X-RAY CRYSTALLOGRAPHY (2.7 ANGSTROMS) OF 392-571 IN COMPLEX WITH N6-METHYLADENOSINE (M6A)-CONTAINING RNA</scope>
</reference>